<reference key="1">
    <citation type="journal article" date="2007" name="Nat. Biotechnol.">
        <title>Genome sequencing and analysis of the versatile cell factory Aspergillus niger CBS 513.88.</title>
        <authorList>
            <person name="Pel H.J."/>
            <person name="de Winde J.H."/>
            <person name="Archer D.B."/>
            <person name="Dyer P.S."/>
            <person name="Hofmann G."/>
            <person name="Schaap P.J."/>
            <person name="Turner G."/>
            <person name="de Vries R.P."/>
            <person name="Albang R."/>
            <person name="Albermann K."/>
            <person name="Andersen M.R."/>
            <person name="Bendtsen J.D."/>
            <person name="Benen J.A.E."/>
            <person name="van den Berg M."/>
            <person name="Breestraat S."/>
            <person name="Caddick M.X."/>
            <person name="Contreras R."/>
            <person name="Cornell M."/>
            <person name="Coutinho P.M."/>
            <person name="Danchin E.G.J."/>
            <person name="Debets A.J.M."/>
            <person name="Dekker P."/>
            <person name="van Dijck P.W.M."/>
            <person name="van Dijk A."/>
            <person name="Dijkhuizen L."/>
            <person name="Driessen A.J.M."/>
            <person name="d'Enfert C."/>
            <person name="Geysens S."/>
            <person name="Goosen C."/>
            <person name="Groot G.S.P."/>
            <person name="de Groot P.W.J."/>
            <person name="Guillemette T."/>
            <person name="Henrissat B."/>
            <person name="Herweijer M."/>
            <person name="van den Hombergh J.P.T.W."/>
            <person name="van den Hondel C.A.M.J.J."/>
            <person name="van der Heijden R.T.J.M."/>
            <person name="van der Kaaij R.M."/>
            <person name="Klis F.M."/>
            <person name="Kools H.J."/>
            <person name="Kubicek C.P."/>
            <person name="van Kuyk P.A."/>
            <person name="Lauber J."/>
            <person name="Lu X."/>
            <person name="van der Maarel M.J.E.C."/>
            <person name="Meulenberg R."/>
            <person name="Menke H."/>
            <person name="Mortimer M.A."/>
            <person name="Nielsen J."/>
            <person name="Oliver S.G."/>
            <person name="Olsthoorn M."/>
            <person name="Pal K."/>
            <person name="van Peij N.N.M.E."/>
            <person name="Ram A.F.J."/>
            <person name="Rinas U."/>
            <person name="Roubos J.A."/>
            <person name="Sagt C.M.J."/>
            <person name="Schmoll M."/>
            <person name="Sun J."/>
            <person name="Ussery D."/>
            <person name="Varga J."/>
            <person name="Vervecken W."/>
            <person name="van de Vondervoort P.J.J."/>
            <person name="Wedler H."/>
            <person name="Woesten H.A.B."/>
            <person name="Zeng A.-P."/>
            <person name="van Ooyen A.J.J."/>
            <person name="Visser J."/>
            <person name="Stam H."/>
        </authorList>
    </citation>
    <scope>NUCLEOTIDE SEQUENCE [LARGE SCALE GENOMIC DNA]</scope>
    <source>
        <strain>ATCC MYA-4892 / CBS 513.88 / FGSC A1513</strain>
    </source>
</reference>
<protein>
    <recommendedName>
        <fullName evidence="1">tRNA (guanine-N(7)-)-methyltransferase</fullName>
        <ecNumber evidence="1">2.1.1.33</ecNumber>
    </recommendedName>
    <alternativeName>
        <fullName evidence="1">Transfer RNA methyltransferase 8</fullName>
    </alternativeName>
    <alternativeName>
        <fullName evidence="1">tRNA (guanine(46)-N(7))-methyltransferase</fullName>
    </alternativeName>
    <alternativeName>
        <fullName evidence="1">tRNA(m7G46)-methyltransferase</fullName>
    </alternativeName>
</protein>
<gene>
    <name type="primary">trm8</name>
    <name type="ORF">An01g07580</name>
</gene>
<accession>A2Q9E4</accession>
<feature type="chain" id="PRO_0000370587" description="tRNA (guanine-N(7)-)-methyltransferase">
    <location>
        <begin position="1"/>
        <end position="297"/>
    </location>
</feature>
<feature type="active site" evidence="1">
    <location>
        <position position="194"/>
    </location>
</feature>
<feature type="binding site" evidence="1">
    <location>
        <position position="101"/>
    </location>
    <ligand>
        <name>S-adenosyl-L-methionine</name>
        <dbReference type="ChEBI" id="CHEBI:59789"/>
    </ligand>
</feature>
<feature type="binding site" evidence="1">
    <location>
        <begin position="124"/>
        <end position="125"/>
    </location>
    <ligand>
        <name>S-adenosyl-L-methionine</name>
        <dbReference type="ChEBI" id="CHEBI:59789"/>
    </ligand>
</feature>
<feature type="binding site" evidence="1">
    <location>
        <begin position="171"/>
        <end position="172"/>
    </location>
    <ligand>
        <name>S-adenosyl-L-methionine</name>
        <dbReference type="ChEBI" id="CHEBI:59789"/>
    </ligand>
</feature>
<feature type="binding site" evidence="1">
    <location>
        <position position="191"/>
    </location>
    <ligand>
        <name>S-adenosyl-L-methionine</name>
        <dbReference type="ChEBI" id="CHEBI:59789"/>
    </ligand>
</feature>
<feature type="binding site" evidence="1">
    <location>
        <begin position="270"/>
        <end position="272"/>
    </location>
    <ligand>
        <name>S-adenosyl-L-methionine</name>
        <dbReference type="ChEBI" id="CHEBI:59789"/>
    </ligand>
</feature>
<evidence type="ECO:0000255" key="1">
    <source>
        <dbReference type="HAMAP-Rule" id="MF_03055"/>
    </source>
</evidence>
<sequence length="297" mass="34052">MSQPPAKRQKRAEYRKQAAEAVVAQPDESAPVAHVKLPKKKFYRQRAHANPFSDHQLNYPLSPAHMDWASHFPAFVNPDATQTNLIGTRKLLKDVEVVDIGCGFGGLLVGLAGLLPETLMVGMEIRIAVLEYLNTRIQALRVQQQQQQQKTQSHAALVPGGYQNISAIRSNTMKFFPNFFNKHQLSKIFICFPDPHFKARKHKARIISETLNAEYAYALRPGGLLYTITDVEEYHHWILRHFRDESALFERVSEEELEKDECVKVMKEATEEGKKVTRNKGNKYVAVFRRKEDPEWA</sequence>
<comment type="function">
    <text evidence="1">Catalyzes the formation of N(7)-methylguanine at position 46 (m7G46) in tRNA.</text>
</comment>
<comment type="catalytic activity">
    <reaction evidence="1">
        <text>guanosine(46) in tRNA + S-adenosyl-L-methionine = N(7)-methylguanosine(46) in tRNA + S-adenosyl-L-homocysteine</text>
        <dbReference type="Rhea" id="RHEA:42708"/>
        <dbReference type="Rhea" id="RHEA-COMP:10188"/>
        <dbReference type="Rhea" id="RHEA-COMP:10189"/>
        <dbReference type="ChEBI" id="CHEBI:57856"/>
        <dbReference type="ChEBI" id="CHEBI:59789"/>
        <dbReference type="ChEBI" id="CHEBI:74269"/>
        <dbReference type="ChEBI" id="CHEBI:74480"/>
        <dbReference type="EC" id="2.1.1.33"/>
    </reaction>
</comment>
<comment type="pathway">
    <text evidence="1">tRNA modification; N(7)-methylguanine-tRNA biosynthesis.</text>
</comment>
<comment type="subunit">
    <text evidence="1">Forms a complex with trm82.</text>
</comment>
<comment type="subcellular location">
    <subcellularLocation>
        <location evidence="1">Nucleus</location>
    </subcellularLocation>
</comment>
<comment type="similarity">
    <text evidence="1">Belongs to the class I-like SAM-binding methyltransferase superfamily. TrmB family.</text>
</comment>
<dbReference type="EC" id="2.1.1.33" evidence="1"/>
<dbReference type="EMBL" id="AM269973">
    <property type="protein sequence ID" value="CAK96183.1"/>
    <property type="molecule type" value="Genomic_DNA"/>
</dbReference>
<dbReference type="SMR" id="A2Q9E4"/>
<dbReference type="EnsemblFungi" id="CAK96183">
    <property type="protein sequence ID" value="CAK96183"/>
    <property type="gene ID" value="An01g07580"/>
</dbReference>
<dbReference type="VEuPathDB" id="FungiDB:An01g07580"/>
<dbReference type="HOGENOM" id="CLU_050910_3_1_1"/>
<dbReference type="UniPathway" id="UPA00989"/>
<dbReference type="Proteomes" id="UP000006706">
    <property type="component" value="Chromosome 2R"/>
</dbReference>
<dbReference type="GO" id="GO:0005634">
    <property type="term" value="C:nucleus"/>
    <property type="evidence" value="ECO:0007669"/>
    <property type="project" value="UniProtKB-SubCell"/>
</dbReference>
<dbReference type="GO" id="GO:0043527">
    <property type="term" value="C:tRNA methyltransferase complex"/>
    <property type="evidence" value="ECO:0007669"/>
    <property type="project" value="TreeGrafter"/>
</dbReference>
<dbReference type="GO" id="GO:0008176">
    <property type="term" value="F:tRNA (guanine(46)-N7)-methyltransferase activity"/>
    <property type="evidence" value="ECO:0007669"/>
    <property type="project" value="UniProtKB-UniRule"/>
</dbReference>
<dbReference type="GO" id="GO:0000049">
    <property type="term" value="F:tRNA binding"/>
    <property type="evidence" value="ECO:0007669"/>
    <property type="project" value="UniProtKB-UniRule"/>
</dbReference>
<dbReference type="FunFam" id="3.40.50.150:FF:000329">
    <property type="entry name" value="tRNA (guanine-N(7)-)-methyltransferase"/>
    <property type="match status" value="1"/>
</dbReference>
<dbReference type="Gene3D" id="3.40.50.150">
    <property type="entry name" value="Vaccinia Virus protein VP39"/>
    <property type="match status" value="1"/>
</dbReference>
<dbReference type="HAMAP" id="MF_03055">
    <property type="entry name" value="tRNA_methyltr_TrmB_euk"/>
    <property type="match status" value="1"/>
</dbReference>
<dbReference type="InterPro" id="IPR029063">
    <property type="entry name" value="SAM-dependent_MTases_sf"/>
</dbReference>
<dbReference type="InterPro" id="IPR025763">
    <property type="entry name" value="Trm8_euk"/>
</dbReference>
<dbReference type="InterPro" id="IPR003358">
    <property type="entry name" value="tRNA_(Gua-N-7)_MeTrfase_Trmb"/>
</dbReference>
<dbReference type="NCBIfam" id="TIGR00091">
    <property type="entry name" value="tRNA (guanosine(46)-N7)-methyltransferase TrmB"/>
    <property type="match status" value="1"/>
</dbReference>
<dbReference type="PANTHER" id="PTHR23417">
    <property type="entry name" value="3-DEOXY-D-MANNO-OCTULOSONIC-ACID TRANSFERASE/TRNA GUANINE-N 7 - -METHYLTRANSFERASE"/>
    <property type="match status" value="1"/>
</dbReference>
<dbReference type="PANTHER" id="PTHR23417:SF16">
    <property type="entry name" value="TRNA (GUANINE-N(7)-)-METHYLTRANSFERASE"/>
    <property type="match status" value="1"/>
</dbReference>
<dbReference type="Pfam" id="PF02390">
    <property type="entry name" value="Methyltransf_4"/>
    <property type="match status" value="1"/>
</dbReference>
<dbReference type="SUPFAM" id="SSF53335">
    <property type="entry name" value="S-adenosyl-L-methionine-dependent methyltransferases"/>
    <property type="match status" value="1"/>
</dbReference>
<dbReference type="PROSITE" id="PS51625">
    <property type="entry name" value="SAM_MT_TRMB"/>
    <property type="match status" value="1"/>
</dbReference>
<organism>
    <name type="scientific">Aspergillus niger (strain ATCC MYA-4892 / CBS 513.88 / FGSC A1513)</name>
    <dbReference type="NCBI Taxonomy" id="425011"/>
    <lineage>
        <taxon>Eukaryota</taxon>
        <taxon>Fungi</taxon>
        <taxon>Dikarya</taxon>
        <taxon>Ascomycota</taxon>
        <taxon>Pezizomycotina</taxon>
        <taxon>Eurotiomycetes</taxon>
        <taxon>Eurotiomycetidae</taxon>
        <taxon>Eurotiales</taxon>
        <taxon>Aspergillaceae</taxon>
        <taxon>Aspergillus</taxon>
        <taxon>Aspergillus subgen. Circumdati</taxon>
    </lineage>
</organism>
<keyword id="KW-0489">Methyltransferase</keyword>
<keyword id="KW-0539">Nucleus</keyword>
<keyword id="KW-1185">Reference proteome</keyword>
<keyword id="KW-0694">RNA-binding</keyword>
<keyword id="KW-0949">S-adenosyl-L-methionine</keyword>
<keyword id="KW-0808">Transferase</keyword>
<keyword id="KW-0819">tRNA processing</keyword>
<keyword id="KW-0820">tRNA-binding</keyword>
<name>TRMB_ASPNC</name>
<proteinExistence type="inferred from homology"/>